<gene>
    <name evidence="1" type="primary">rpmA</name>
    <name type="ordered locus">Caur_2317</name>
</gene>
<protein>
    <recommendedName>
        <fullName evidence="1">Large ribosomal subunit protein bL27</fullName>
    </recommendedName>
    <alternativeName>
        <fullName evidence="3">50S ribosomal protein L27</fullName>
    </alternativeName>
</protein>
<proteinExistence type="inferred from homology"/>
<comment type="similarity">
    <text evidence="1">Belongs to the bacterial ribosomal protein bL27 family.</text>
</comment>
<name>RL27_CHLAA</name>
<keyword id="KW-1185">Reference proteome</keyword>
<keyword id="KW-0687">Ribonucleoprotein</keyword>
<keyword id="KW-0689">Ribosomal protein</keyword>
<organism>
    <name type="scientific">Chloroflexus aurantiacus (strain ATCC 29366 / DSM 635 / J-10-fl)</name>
    <dbReference type="NCBI Taxonomy" id="324602"/>
    <lineage>
        <taxon>Bacteria</taxon>
        <taxon>Bacillati</taxon>
        <taxon>Chloroflexota</taxon>
        <taxon>Chloroflexia</taxon>
        <taxon>Chloroflexales</taxon>
        <taxon>Chloroflexineae</taxon>
        <taxon>Chloroflexaceae</taxon>
        <taxon>Chloroflexus</taxon>
    </lineage>
</organism>
<feature type="chain" id="PRO_1000081879" description="Large ribosomal subunit protein bL27">
    <location>
        <begin position="1"/>
        <end position="91"/>
    </location>
</feature>
<feature type="region of interest" description="Disordered" evidence="2">
    <location>
        <begin position="1"/>
        <end position="26"/>
    </location>
</feature>
<evidence type="ECO:0000255" key="1">
    <source>
        <dbReference type="HAMAP-Rule" id="MF_00539"/>
    </source>
</evidence>
<evidence type="ECO:0000256" key="2">
    <source>
        <dbReference type="SAM" id="MobiDB-lite"/>
    </source>
</evidence>
<evidence type="ECO:0000305" key="3"/>
<dbReference type="EMBL" id="CP000909">
    <property type="protein sequence ID" value="ABY35526.1"/>
    <property type="molecule type" value="Genomic_DNA"/>
</dbReference>
<dbReference type="RefSeq" id="WP_012258180.1">
    <property type="nucleotide sequence ID" value="NC_010175.1"/>
</dbReference>
<dbReference type="RefSeq" id="YP_001635915.1">
    <property type="nucleotide sequence ID" value="NC_010175.1"/>
</dbReference>
<dbReference type="SMR" id="A9WGJ4"/>
<dbReference type="FunCoup" id="A9WGJ4">
    <property type="interactions" value="389"/>
</dbReference>
<dbReference type="STRING" id="324602.Caur_2317"/>
<dbReference type="EnsemblBacteria" id="ABY35526">
    <property type="protein sequence ID" value="ABY35526"/>
    <property type="gene ID" value="Caur_2317"/>
</dbReference>
<dbReference type="KEGG" id="cau:Caur_2317"/>
<dbReference type="PATRIC" id="fig|324602.8.peg.2624"/>
<dbReference type="eggNOG" id="COG0211">
    <property type="taxonomic scope" value="Bacteria"/>
</dbReference>
<dbReference type="HOGENOM" id="CLU_095424_4_0_0"/>
<dbReference type="InParanoid" id="A9WGJ4"/>
<dbReference type="Proteomes" id="UP000002008">
    <property type="component" value="Chromosome"/>
</dbReference>
<dbReference type="GO" id="GO:0022625">
    <property type="term" value="C:cytosolic large ribosomal subunit"/>
    <property type="evidence" value="ECO:0000318"/>
    <property type="project" value="GO_Central"/>
</dbReference>
<dbReference type="GO" id="GO:0003735">
    <property type="term" value="F:structural constituent of ribosome"/>
    <property type="evidence" value="ECO:0000318"/>
    <property type="project" value="GO_Central"/>
</dbReference>
<dbReference type="GO" id="GO:0006412">
    <property type="term" value="P:translation"/>
    <property type="evidence" value="ECO:0007669"/>
    <property type="project" value="UniProtKB-UniRule"/>
</dbReference>
<dbReference type="FunFam" id="2.40.50.100:FF:000026">
    <property type="entry name" value="50S ribosomal protein L27"/>
    <property type="match status" value="1"/>
</dbReference>
<dbReference type="Gene3D" id="2.40.50.100">
    <property type="match status" value="1"/>
</dbReference>
<dbReference type="HAMAP" id="MF_00539">
    <property type="entry name" value="Ribosomal_bL27"/>
    <property type="match status" value="1"/>
</dbReference>
<dbReference type="InterPro" id="IPR001684">
    <property type="entry name" value="Ribosomal_bL27"/>
</dbReference>
<dbReference type="NCBIfam" id="TIGR00062">
    <property type="entry name" value="L27"/>
    <property type="match status" value="1"/>
</dbReference>
<dbReference type="PANTHER" id="PTHR15893:SF0">
    <property type="entry name" value="LARGE RIBOSOMAL SUBUNIT PROTEIN BL27M"/>
    <property type="match status" value="1"/>
</dbReference>
<dbReference type="PANTHER" id="PTHR15893">
    <property type="entry name" value="RIBOSOMAL PROTEIN L27"/>
    <property type="match status" value="1"/>
</dbReference>
<dbReference type="Pfam" id="PF01016">
    <property type="entry name" value="Ribosomal_L27"/>
    <property type="match status" value="1"/>
</dbReference>
<dbReference type="PRINTS" id="PR00063">
    <property type="entry name" value="RIBOSOMALL27"/>
</dbReference>
<dbReference type="SUPFAM" id="SSF110324">
    <property type="entry name" value="Ribosomal L27 protein-like"/>
    <property type="match status" value="1"/>
</dbReference>
<sequence>MAHKKGVGSSRNGRDSNPKMRGVKRFGGEHVRAGNIIVRQCGTKIKPGENVGVGRDWTLYALVDGVVQFGHYSRTQKMVSVIPVTAAETAH</sequence>
<accession>A9WGJ4</accession>
<reference key="1">
    <citation type="journal article" date="2011" name="BMC Genomics">
        <title>Complete genome sequence of the filamentous anoxygenic phototrophic bacterium Chloroflexus aurantiacus.</title>
        <authorList>
            <person name="Tang K.H."/>
            <person name="Barry K."/>
            <person name="Chertkov O."/>
            <person name="Dalin E."/>
            <person name="Han C.S."/>
            <person name="Hauser L.J."/>
            <person name="Honchak B.M."/>
            <person name="Karbach L.E."/>
            <person name="Land M.L."/>
            <person name="Lapidus A."/>
            <person name="Larimer F.W."/>
            <person name="Mikhailova N."/>
            <person name="Pitluck S."/>
            <person name="Pierson B.K."/>
            <person name="Blankenship R.E."/>
        </authorList>
    </citation>
    <scope>NUCLEOTIDE SEQUENCE [LARGE SCALE GENOMIC DNA]</scope>
    <source>
        <strain>ATCC 29366 / DSM 635 / J-10-fl</strain>
    </source>
</reference>